<organism>
    <name type="scientific">Oryctolagus cuniculus</name>
    <name type="common">Rabbit</name>
    <dbReference type="NCBI Taxonomy" id="9986"/>
    <lineage>
        <taxon>Eukaryota</taxon>
        <taxon>Metazoa</taxon>
        <taxon>Chordata</taxon>
        <taxon>Craniata</taxon>
        <taxon>Vertebrata</taxon>
        <taxon>Euteleostomi</taxon>
        <taxon>Mammalia</taxon>
        <taxon>Eutheria</taxon>
        <taxon>Euarchontoglires</taxon>
        <taxon>Glires</taxon>
        <taxon>Lagomorpha</taxon>
        <taxon>Leporidae</taxon>
        <taxon>Oryctolagus</taxon>
    </lineage>
</organism>
<name>RL21_RABIT</name>
<reference key="1">
    <citation type="journal article" date="2011" name="Nature">
        <title>A high-resolution map of human evolutionary constraint using 29 mammals.</title>
        <authorList>
            <person name="Lindblad-Toh K."/>
            <person name="Garber M."/>
            <person name="Zuk O."/>
            <person name="Lin M.F."/>
            <person name="Parker B.J."/>
            <person name="Washietl S."/>
            <person name="Kheradpour P."/>
            <person name="Ernst J."/>
            <person name="Jordan G."/>
            <person name="Mauceli E."/>
            <person name="Ward L.D."/>
            <person name="Lowe C.B."/>
            <person name="Holloway A.K."/>
            <person name="Clamp M."/>
            <person name="Gnerre S."/>
            <person name="Alfoldi J."/>
            <person name="Beal K."/>
            <person name="Chang J."/>
            <person name="Clawson H."/>
            <person name="Cuff J."/>
            <person name="Di Palma F."/>
            <person name="Fitzgerald S."/>
            <person name="Flicek P."/>
            <person name="Guttman M."/>
            <person name="Hubisz M.J."/>
            <person name="Jaffe D.B."/>
            <person name="Jungreis I."/>
            <person name="Kent W.J."/>
            <person name="Kostka D."/>
            <person name="Lara M."/>
            <person name="Martins A.L."/>
            <person name="Massingham T."/>
            <person name="Moltke I."/>
            <person name="Raney B.J."/>
            <person name="Rasmussen M.D."/>
            <person name="Robinson J."/>
            <person name="Stark A."/>
            <person name="Vilella A.J."/>
            <person name="Wen J."/>
            <person name="Xie X."/>
            <person name="Zody M.C."/>
            <person name="Baldwin J."/>
            <person name="Bloom T."/>
            <person name="Chin C.W."/>
            <person name="Heiman D."/>
            <person name="Nicol R."/>
            <person name="Nusbaum C."/>
            <person name="Young S."/>
            <person name="Wilkinson J."/>
            <person name="Worley K.C."/>
            <person name="Kovar C.L."/>
            <person name="Muzny D.M."/>
            <person name="Gibbs R.A."/>
            <person name="Cree A."/>
            <person name="Dihn H.H."/>
            <person name="Fowler G."/>
            <person name="Jhangiani S."/>
            <person name="Joshi V."/>
            <person name="Lee S."/>
            <person name="Lewis L.R."/>
            <person name="Nazareth L.V."/>
            <person name="Okwuonu G."/>
            <person name="Santibanez J."/>
            <person name="Warren W.C."/>
            <person name="Mardis E.R."/>
            <person name="Weinstock G.M."/>
            <person name="Wilson R.K."/>
            <person name="Delehaunty K."/>
            <person name="Dooling D."/>
            <person name="Fronik C."/>
            <person name="Fulton L."/>
            <person name="Fulton B."/>
            <person name="Graves T."/>
            <person name="Minx P."/>
            <person name="Sodergren E."/>
            <person name="Birney E."/>
            <person name="Margulies E.H."/>
            <person name="Herrero J."/>
            <person name="Green E.D."/>
            <person name="Haussler D."/>
            <person name="Siepel A."/>
            <person name="Goldman N."/>
            <person name="Pollard K.S."/>
            <person name="Pedersen J.S."/>
            <person name="Lander E.S."/>
            <person name="Kellis M."/>
        </authorList>
    </citation>
    <scope>NUCLEOTIDE SEQUENCE [LARGE SCALE GENOMIC DNA]</scope>
    <source>
        <strain>Thorbecke</strain>
    </source>
</reference>
<reference evidence="18 19" key="2">
    <citation type="journal article" date="2015" name="Nature">
        <title>Structural basis for stop codon recognition in eukaryotes.</title>
        <authorList>
            <person name="Brown A."/>
            <person name="Shao S."/>
            <person name="Murray J."/>
            <person name="Hegde R.S."/>
            <person name="Ramakrishnan V."/>
        </authorList>
    </citation>
    <scope>STRUCTURE BY ELECTRON MICROSCOPY (3.45 ANGSTROMS) OF 2-160 OF RIBOSOME</scope>
    <scope>FUNCTION</scope>
    <scope>SUBCELLULAR LOCATION</scope>
    <scope>SUBUNIT</scope>
</reference>
<reference evidence="20 21" key="3">
    <citation type="journal article" date="2016" name="Cell">
        <title>Decoding mammalian ribosome-mRNA states by translational GTPase complexes.</title>
        <authorList>
            <person name="Shao S."/>
            <person name="Murray J."/>
            <person name="Brown A."/>
            <person name="Taunton J."/>
            <person name="Ramakrishnan V."/>
            <person name="Hegde R.S."/>
        </authorList>
    </citation>
    <scope>STRUCTURE BY ELECTRON MICROSCOPY (3.31 ANGSTROMS) OF RIBOSOME</scope>
    <scope>FUNCTION</scope>
    <scope>SUBCELLULAR LOCATION</scope>
    <scope>SUBUNIT</scope>
</reference>
<reference evidence="24" key="4">
    <citation type="journal article" date="2018" name="Cell Rep.">
        <title>tRNA translocation by the eukaryotic 80S ribosome and the impact of GTP hydrolysis.</title>
        <authorList>
            <person name="Flis J."/>
            <person name="Holm M."/>
            <person name="Rundlet E.J."/>
            <person name="Loerke J."/>
            <person name="Hilal T."/>
            <person name="Dabrowski M."/>
            <person name="Burger J."/>
            <person name="Mielke T."/>
            <person name="Blanchard S.C."/>
            <person name="Spahn C.M.T."/>
            <person name="Budkevich T.V."/>
        </authorList>
    </citation>
    <scope>STRUCTURE BY ELECTRON MICROSCOPY (3.60 ANGSTROMS) OF 2-158 OF RIBOSOME</scope>
    <scope>FUNCTION</scope>
    <scope>SUBCELLULAR LOCATION</scope>
    <scope>SUBUNIT</scope>
</reference>
<reference evidence="22 23" key="5">
    <citation type="journal article" date="2018" name="Elife">
        <title>Dual tRNA mimicry in the Cricket paralysis virus IRES uncovers an unexpected similarity with the Hepatitis C Virus IRES.</title>
        <authorList>
            <person name="Pisareva V.P."/>
            <person name="Pisarev A.V."/>
            <person name="Fernandez I.S."/>
        </authorList>
    </citation>
    <scope>STRUCTURE BY ELECTRON MICROSCOPY (3.20 ANGSTROMS) OF RIBOSOME</scope>
    <scope>SUBCELLULAR LOCATION</scope>
    <scope>SUBUNIT</scope>
</reference>
<reference evidence="27 28" key="6">
    <citation type="journal article" date="2018" name="Elife">
        <title>Structures of translationally inactive mammalian ribosomes.</title>
        <authorList>
            <person name="Brown A."/>
            <person name="Baird M.R."/>
            <person name="Yip M.C."/>
            <person name="Murray J."/>
            <person name="Shao S."/>
        </authorList>
    </citation>
    <scope>STRUCTURE BY ELECTRON MICROSCOPY (3.30 ANGSTROMS) OF 2-160 OF RIBOSOME</scope>
    <scope>SUBCELLULAR LOCATION</scope>
    <scope>SUBUNIT</scope>
</reference>
<reference evidence="25 26" key="7">
    <citation type="journal article" date="2018" name="Mol. Cell">
        <title>ZNF598 is a quality control sensor of collided ribosomes.</title>
        <authorList>
            <person name="Juszkiewicz S."/>
            <person name="Chandrasekaran V."/>
            <person name="Lin Z."/>
            <person name="Kraatz S."/>
            <person name="Ramakrishnan V."/>
            <person name="Hegde R.S."/>
        </authorList>
    </citation>
    <scope>STRUCTURE BY ELECTRON MICROSCOPY (3.80 ANGSTROMS) OF RIBOSOME</scope>
    <scope>SUBCELLULAR LOCATION</scope>
    <scope>SUBUNIT</scope>
</reference>
<reference evidence="31 32" key="8">
    <citation type="journal article" date="2019" name="Elife">
        <title>Structural and mutational analysis of the ribosome-arresting human XBP1u.</title>
        <authorList>
            <person name="Shanmuganathan V."/>
            <person name="Schiller N."/>
            <person name="Magoulopoulou A."/>
            <person name="Cheng J."/>
            <person name="Braunger K."/>
            <person name="Cymer F."/>
            <person name="Berninghausen O."/>
            <person name="Beatrix B."/>
            <person name="Kohno K."/>
            <person name="von Heijne G."/>
            <person name="Beckmann R."/>
        </authorList>
    </citation>
    <scope>STRUCTURE BY ELECTRON MICROSCOPY (3.00 ANGSTROMS) OF 2-160 OF RIBOSOME</scope>
    <scope>SUBCELLULAR LOCATION</scope>
    <scope>SUBUNIT</scope>
</reference>
<reference evidence="29 30" key="9">
    <citation type="journal article" date="2019" name="EMBO J.">
        <title>The Israeli acute paralysis virus IRES captures host ribosomes by mimicking a ribosomal state with hybrid tRNAs.</title>
        <authorList>
            <person name="Acosta-Reyes F."/>
            <person name="Neupane R."/>
            <person name="Frank J."/>
            <person name="Fernandez I.S."/>
        </authorList>
    </citation>
    <scope>STRUCTURE BY ELECTRON MICROSCOPY (3.10 ANGSTROMS) OF RIBOSOME</scope>
    <scope>SUBCELLULAR LOCATION</scope>
    <scope>SUBUNIT</scope>
</reference>
<reference evidence="33" key="10">
    <citation type="journal article" date="2019" name="Nat. Struct. Mol. Biol.">
        <title>Mechanism of ribosome stalling during translation of a poly(A) tail.</title>
        <authorList>
            <person name="Chandrasekaran V."/>
            <person name="Juszkiewicz S."/>
            <person name="Choi J."/>
            <person name="Puglisi J.D."/>
            <person name="Brown A."/>
            <person name="Shao S."/>
            <person name="Ramakrishnan V."/>
            <person name="Hegde R.S."/>
        </authorList>
    </citation>
    <scope>STRUCTURE BY ELECTRON MICROSCOPY (2.80 ANGSTROMS) OF RIBOSOME</scope>
    <scope>SUBCELLULAR LOCATION</scope>
    <scope>SUBUNIT</scope>
</reference>
<reference evidence="34 35" key="11">
    <citation type="journal article" date="2020" name="Cell Rep.">
        <title>The Halastavi arva virus intergenic region IRES promotes translation by the simplest possible initiation mechanism.</title>
        <authorList>
            <person name="Abaeva I.S."/>
            <person name="Vicens Q."/>
            <person name="Bochler A."/>
            <person name="Soufari H."/>
            <person name="Simonetti A."/>
            <person name="Pestova T.V."/>
            <person name="Hashem Y."/>
            <person name="Hellen C.U.T."/>
        </authorList>
    </citation>
    <scope>STRUCTURE BY ELECTRON MICROSCOPY (3.49 ANGSTROMS) OF 2-160 OF RIBOSOME</scope>
    <scope>SUBCELLULAR LOCATION</scope>
    <scope>SUBUNIT</scope>
</reference>
<reference evidence="37 38" key="12">
    <citation type="journal article" date="2022" name="Mol. Cell">
        <title>Direct epitranscriptomic regulation of mammalian translation initiation through N4-acetylcytidine.</title>
        <authorList>
            <person name="Arango D."/>
            <person name="Sturgill D."/>
            <person name="Yang R."/>
            <person name="Kanai T."/>
            <person name="Bauer P."/>
            <person name="Roy J."/>
            <person name="Wang Z."/>
            <person name="Hosogane M."/>
            <person name="Schiffers S."/>
            <person name="Oberdoerffer S."/>
        </authorList>
    </citation>
    <scope>STRUCTURE BY ELECTRON MICROSCOPY (2.80 ANGSTROMS) OF 2-160 OF RIBOSOME</scope>
    <scope>SUBCELLULAR LOCATION</scope>
    <scope>SUBUNIT</scope>
</reference>
<reference evidence="39 40" key="13">
    <citation type="journal article" date="2022" name="Science">
        <title>Structure of the mammalian ribosome as it decodes the selenocysteine UGA codon.</title>
        <authorList>
            <person name="Hilal T."/>
            <person name="Killam B.Y."/>
            <person name="Grozdanovic M."/>
            <person name="Dobosz-Bartoszek M."/>
            <person name="Loerke J."/>
            <person name="Buerger J."/>
            <person name="Mielke T."/>
            <person name="Copeland P.R."/>
            <person name="Simonovic M."/>
            <person name="Spahn C.M.T."/>
        </authorList>
    </citation>
    <scope>STRUCTURE BY ELECTRON MICROSCOPY (2.80 ANGSTROMS) OF RIBOSOME</scope>
    <scope>SUBCELLULAR LOCATION</scope>
    <scope>SUBUNIT</scope>
</reference>
<reference evidence="36" key="14">
    <citation type="journal article" date="2023" name="Nature">
        <title>A molecular network of conserved factors keeps ribosomes dormant in the egg.</title>
        <authorList>
            <person name="Leesch F."/>
            <person name="Lorenzo-Orts L."/>
            <person name="Pribitzer C."/>
            <person name="Grishkovskaya I."/>
            <person name="Roehsner J."/>
            <person name="Chugunova A."/>
            <person name="Matzinger M."/>
            <person name="Roitinger E."/>
            <person name="Belacic K."/>
            <person name="Kandolf S."/>
            <person name="Lin T.Y."/>
            <person name="Mechtler K."/>
            <person name="Meinhart A."/>
            <person name="Haselbach D."/>
            <person name="Pauli A."/>
        </authorList>
    </citation>
    <scope>STRUCTURE BY ELECTRON MICROSCOPY (2.30 ANGSTROMS) OF RIBOSOME</scope>
    <scope>SUBCELLULAR LOCATION</scope>
    <scope>SUBUNIT</scope>
</reference>
<keyword id="KW-0002">3D-structure</keyword>
<keyword id="KW-0963">Cytoplasm</keyword>
<keyword id="KW-0256">Endoplasmic reticulum</keyword>
<keyword id="KW-1185">Reference proteome</keyword>
<keyword id="KW-0687">Ribonucleoprotein</keyword>
<keyword id="KW-0689">Ribosomal protein</keyword>
<gene>
    <name type="primary">RPL21</name>
</gene>
<protein>
    <recommendedName>
        <fullName>Large ribosomal subunit protein eL21</fullName>
    </recommendedName>
    <alternativeName>
        <fullName>60S ribosomal protein L21</fullName>
    </alternativeName>
</protein>
<feature type="initiator methionine" description="Removed" evidence="1">
    <location>
        <position position="1"/>
    </location>
</feature>
<feature type="chain" id="PRO_0000460109" description="Large ribosomal subunit protein eL21">
    <location>
        <begin position="2"/>
        <end position="160"/>
    </location>
</feature>
<feature type="region of interest" description="Disordered" evidence="3">
    <location>
        <begin position="112"/>
        <end position="145"/>
    </location>
</feature>
<feature type="compositionally biased region" description="Basic and acidic residues" evidence="3">
    <location>
        <begin position="112"/>
        <end position="123"/>
    </location>
</feature>
<feature type="compositionally biased region" description="Basic and acidic residues" evidence="3">
    <location>
        <begin position="136"/>
        <end position="145"/>
    </location>
</feature>
<accession>G1SHQ2</accession>
<accession>G1TRU0</accession>
<sequence length="160" mass="18565">MTNTKGKRRGTRYMFSRPFRKHGVVPLATYMRIYKKGDIVDIKGMGTVQKGMPHKCYHGKTGRVYNVTQHAVGIVVNKQVKGKILAKRINVRIEHIKHSKSRDSFLKRVKENDQKKKEAKEKGTWVQLKRQPAPPREAHFVRTNGKEPELLEPIPYEFMA</sequence>
<evidence type="ECO:0000250" key="1">
    <source>
        <dbReference type="UniProtKB" id="P46778"/>
    </source>
</evidence>
<evidence type="ECO:0000250" key="2">
    <source>
        <dbReference type="UniProtKB" id="P49666"/>
    </source>
</evidence>
<evidence type="ECO:0000256" key="3">
    <source>
        <dbReference type="SAM" id="MobiDB-lite"/>
    </source>
</evidence>
<evidence type="ECO:0000269" key="4">
    <source>
    </source>
</evidence>
<evidence type="ECO:0000269" key="5">
    <source>
    </source>
</evidence>
<evidence type="ECO:0000269" key="6">
    <source>
    </source>
</evidence>
<evidence type="ECO:0000269" key="7">
    <source>
    </source>
</evidence>
<evidence type="ECO:0000269" key="8">
    <source>
    </source>
</evidence>
<evidence type="ECO:0000269" key="9">
    <source>
    </source>
</evidence>
<evidence type="ECO:0000269" key="10">
    <source>
    </source>
</evidence>
<evidence type="ECO:0000269" key="11">
    <source>
    </source>
</evidence>
<evidence type="ECO:0000269" key="12">
    <source>
    </source>
</evidence>
<evidence type="ECO:0000269" key="13">
    <source>
    </source>
</evidence>
<evidence type="ECO:0000269" key="14">
    <source>
    </source>
</evidence>
<evidence type="ECO:0000269" key="15">
    <source>
    </source>
</evidence>
<evidence type="ECO:0000269" key="16">
    <source>
    </source>
</evidence>
<evidence type="ECO:0000305" key="17"/>
<evidence type="ECO:0007744" key="18">
    <source>
        <dbReference type="PDB" id="3JAG"/>
    </source>
</evidence>
<evidence type="ECO:0007744" key="19">
    <source>
        <dbReference type="PDB" id="3JAH"/>
    </source>
</evidence>
<evidence type="ECO:0007744" key="20">
    <source>
        <dbReference type="PDB" id="5LZS"/>
    </source>
</evidence>
<evidence type="ECO:0007744" key="21">
    <source>
        <dbReference type="PDB" id="5LZT"/>
    </source>
</evidence>
<evidence type="ECO:0007744" key="22">
    <source>
        <dbReference type="PDB" id="6D90"/>
    </source>
</evidence>
<evidence type="ECO:0007744" key="23">
    <source>
        <dbReference type="PDB" id="6D9J"/>
    </source>
</evidence>
<evidence type="ECO:0007744" key="24">
    <source>
        <dbReference type="PDB" id="6GZ3"/>
    </source>
</evidence>
<evidence type="ECO:0007744" key="25">
    <source>
        <dbReference type="PDB" id="6HCF"/>
    </source>
</evidence>
<evidence type="ECO:0007744" key="26">
    <source>
        <dbReference type="PDB" id="6HCJ"/>
    </source>
</evidence>
<evidence type="ECO:0007744" key="27">
    <source>
        <dbReference type="PDB" id="6MTB"/>
    </source>
</evidence>
<evidence type="ECO:0007744" key="28">
    <source>
        <dbReference type="PDB" id="6MTC"/>
    </source>
</evidence>
<evidence type="ECO:0007744" key="29">
    <source>
        <dbReference type="PDB" id="6P5I"/>
    </source>
</evidence>
<evidence type="ECO:0007744" key="30">
    <source>
        <dbReference type="PDB" id="6P5J"/>
    </source>
</evidence>
<evidence type="ECO:0007744" key="31">
    <source>
        <dbReference type="PDB" id="6R5Q"/>
    </source>
</evidence>
<evidence type="ECO:0007744" key="32">
    <source>
        <dbReference type="PDB" id="6R6G"/>
    </source>
</evidence>
<evidence type="ECO:0007744" key="33">
    <source>
        <dbReference type="PDB" id="6SGC"/>
    </source>
</evidence>
<evidence type="ECO:0007744" key="34">
    <source>
        <dbReference type="PDB" id="6ZVK"/>
    </source>
</evidence>
<evidence type="ECO:0007744" key="35">
    <source>
        <dbReference type="PDB" id="7A01"/>
    </source>
</evidence>
<evidence type="ECO:0007744" key="36">
    <source>
        <dbReference type="PDB" id="7OYD"/>
    </source>
</evidence>
<evidence type="ECO:0007744" key="37">
    <source>
        <dbReference type="PDB" id="7UCJ"/>
    </source>
</evidence>
<evidence type="ECO:0007744" key="38">
    <source>
        <dbReference type="PDB" id="7UCK"/>
    </source>
</evidence>
<evidence type="ECO:0007744" key="39">
    <source>
        <dbReference type="PDB" id="7ZJW"/>
    </source>
</evidence>
<evidence type="ECO:0007744" key="40">
    <source>
        <dbReference type="PDB" id="7ZJX"/>
    </source>
</evidence>
<comment type="function">
    <text evidence="4 5 9">Component of the large ribosomal subunit (PubMed:26245381, PubMed:27863242, PubMed:30517857). The ribosome is a large ribonucleoprotein complex responsible for the synthesis of proteins in the cell (PubMed:26245381, PubMed:27863242, PubMed:30517857).</text>
</comment>
<comment type="subunit">
    <text evidence="4 5 6 7 8 9 10 11 12 13 14 15 16">Component of the large ribosomal subunit.</text>
</comment>
<comment type="subcellular location">
    <subcellularLocation>
        <location evidence="1">Cytoplasm</location>
        <location evidence="1">Cytosol</location>
    </subcellularLocation>
    <subcellularLocation>
        <location evidence="4 5 6 7 8 9 10 11 12 13 14 15 16">Cytoplasm</location>
    </subcellularLocation>
    <subcellularLocation>
        <location evidence="2">Endoplasmic reticulum</location>
    </subcellularLocation>
    <text evidence="1 2">Detected on cytosolic polysomes (By similarity). Detected in ribosomes that are associated with the rough endoplasmic reticulum (By similarity).</text>
</comment>
<comment type="similarity">
    <text evidence="17">Belongs to the eukaryotic ribosomal protein eL21 family.</text>
</comment>
<proteinExistence type="evidence at protein level"/>
<dbReference type="EMBL" id="AAGW02011947">
    <property type="status" value="NOT_ANNOTATED_CDS"/>
    <property type="molecule type" value="Genomic_DNA"/>
</dbReference>
<dbReference type="RefSeq" id="XP_002721461.1">
    <property type="nucleotide sequence ID" value="XM_002721415.5"/>
</dbReference>
<dbReference type="RefSeq" id="XP_008273428.1">
    <property type="nucleotide sequence ID" value="XM_008275206.4"/>
</dbReference>
<dbReference type="RefSeq" id="XP_017202661.1">
    <property type="nucleotide sequence ID" value="XM_017347172.1"/>
</dbReference>
<dbReference type="RefSeq" id="XP_069905178.1">
    <property type="nucleotide sequence ID" value="XM_070049077.1"/>
</dbReference>
<dbReference type="PDB" id="3JAG">
    <property type="method" value="EM"/>
    <property type="resolution" value="3.65 A"/>
    <property type="chains" value="T=2-160"/>
</dbReference>
<dbReference type="PDB" id="3JAH">
    <property type="method" value="EM"/>
    <property type="resolution" value="3.45 A"/>
    <property type="chains" value="T=2-160"/>
</dbReference>
<dbReference type="PDB" id="3JAI">
    <property type="method" value="EM"/>
    <property type="resolution" value="3.65 A"/>
    <property type="chains" value="T=2-160"/>
</dbReference>
<dbReference type="PDB" id="5LZS">
    <property type="method" value="EM"/>
    <property type="resolution" value="3.31 A"/>
    <property type="chains" value="T=1-160"/>
</dbReference>
<dbReference type="PDB" id="5LZT">
    <property type="method" value="EM"/>
    <property type="resolution" value="3.65 A"/>
    <property type="chains" value="T=1-160"/>
</dbReference>
<dbReference type="PDB" id="5LZU">
    <property type="method" value="EM"/>
    <property type="resolution" value="3.75 A"/>
    <property type="chains" value="T=1-160"/>
</dbReference>
<dbReference type="PDB" id="5LZV">
    <property type="method" value="EM"/>
    <property type="resolution" value="3.35 A"/>
    <property type="chains" value="T=1-160"/>
</dbReference>
<dbReference type="PDB" id="5LZW">
    <property type="method" value="EM"/>
    <property type="resolution" value="3.53 A"/>
    <property type="chains" value="T=1-160"/>
</dbReference>
<dbReference type="PDB" id="5LZX">
    <property type="method" value="EM"/>
    <property type="resolution" value="3.67 A"/>
    <property type="chains" value="T=1-160"/>
</dbReference>
<dbReference type="PDB" id="5LZY">
    <property type="method" value="EM"/>
    <property type="resolution" value="3.99 A"/>
    <property type="chains" value="T=1-160"/>
</dbReference>
<dbReference type="PDB" id="5LZZ">
    <property type="method" value="EM"/>
    <property type="resolution" value="3.47 A"/>
    <property type="chains" value="T=1-160"/>
</dbReference>
<dbReference type="PDB" id="6D90">
    <property type="method" value="EM"/>
    <property type="resolution" value="3.20 A"/>
    <property type="chains" value="T=1-160"/>
</dbReference>
<dbReference type="PDB" id="6D9J">
    <property type="method" value="EM"/>
    <property type="resolution" value="3.20 A"/>
    <property type="chains" value="T=1-160"/>
</dbReference>
<dbReference type="PDB" id="6FTG">
    <property type="method" value="EM"/>
    <property type="resolution" value="9.10 A"/>
    <property type="chains" value="T=2-160"/>
</dbReference>
<dbReference type="PDB" id="6FTI">
    <property type="method" value="EM"/>
    <property type="resolution" value="4.20 A"/>
    <property type="chains" value="T=2-160"/>
</dbReference>
<dbReference type="PDB" id="6FTJ">
    <property type="method" value="EM"/>
    <property type="resolution" value="4.70 A"/>
    <property type="chains" value="T=2-160"/>
</dbReference>
<dbReference type="PDB" id="6GZ3">
    <property type="method" value="EM"/>
    <property type="resolution" value="3.60 A"/>
    <property type="chains" value="AT=2-158"/>
</dbReference>
<dbReference type="PDB" id="6HCF">
    <property type="method" value="EM"/>
    <property type="resolution" value="3.90 A"/>
    <property type="chains" value="T3=1-160"/>
</dbReference>
<dbReference type="PDB" id="6HCJ">
    <property type="method" value="EM"/>
    <property type="resolution" value="3.80 A"/>
    <property type="chains" value="T3=1-160"/>
</dbReference>
<dbReference type="PDB" id="6HCM">
    <property type="method" value="EM"/>
    <property type="resolution" value="6.80 A"/>
    <property type="chains" value="T3=1-160"/>
</dbReference>
<dbReference type="PDB" id="6HCQ">
    <property type="method" value="EM"/>
    <property type="resolution" value="6.50 A"/>
    <property type="chains" value="T3=1-160"/>
</dbReference>
<dbReference type="PDB" id="6MTB">
    <property type="method" value="EM"/>
    <property type="resolution" value="3.60 A"/>
    <property type="chains" value="T=2-160"/>
</dbReference>
<dbReference type="PDB" id="6MTC">
    <property type="method" value="EM"/>
    <property type="resolution" value="3.40 A"/>
    <property type="chains" value="T=2-160"/>
</dbReference>
<dbReference type="PDB" id="6MTD">
    <property type="method" value="EM"/>
    <property type="resolution" value="3.30 A"/>
    <property type="chains" value="T=2-160"/>
</dbReference>
<dbReference type="PDB" id="6MTE">
    <property type="method" value="EM"/>
    <property type="resolution" value="3.40 A"/>
    <property type="chains" value="T=2-160"/>
</dbReference>
<dbReference type="PDB" id="6P5I">
    <property type="method" value="EM"/>
    <property type="resolution" value="3.10 A"/>
    <property type="chains" value="AT=1-160"/>
</dbReference>
<dbReference type="PDB" id="6P5J">
    <property type="method" value="EM"/>
    <property type="resolution" value="3.10 A"/>
    <property type="chains" value="AT=1-160"/>
</dbReference>
<dbReference type="PDB" id="6P5K">
    <property type="method" value="EM"/>
    <property type="resolution" value="3.10 A"/>
    <property type="chains" value="AT=1-160"/>
</dbReference>
<dbReference type="PDB" id="6P5N">
    <property type="method" value="EM"/>
    <property type="resolution" value="3.20 A"/>
    <property type="chains" value="AT=1-160"/>
</dbReference>
<dbReference type="PDB" id="6R5Q">
    <property type="method" value="EM"/>
    <property type="resolution" value="3.00 A"/>
    <property type="chains" value="T=2-160"/>
</dbReference>
<dbReference type="PDB" id="6R6G">
    <property type="method" value="EM"/>
    <property type="resolution" value="3.70 A"/>
    <property type="chains" value="T=2-160"/>
</dbReference>
<dbReference type="PDB" id="6R6P">
    <property type="method" value="EM"/>
    <property type="resolution" value="3.10 A"/>
    <property type="chains" value="T=2-160"/>
</dbReference>
<dbReference type="PDB" id="6R7Q">
    <property type="method" value="EM"/>
    <property type="resolution" value="3.90 A"/>
    <property type="chains" value="T=2-160"/>
</dbReference>
<dbReference type="PDB" id="6SGC">
    <property type="method" value="EM"/>
    <property type="resolution" value="2.80 A"/>
    <property type="chains" value="T2=1-160"/>
</dbReference>
<dbReference type="PDB" id="6T59">
    <property type="method" value="EM"/>
    <property type="resolution" value="3.11 A"/>
    <property type="chains" value="T3=1-160"/>
</dbReference>
<dbReference type="PDB" id="6ZVK">
    <property type="method" value="EM"/>
    <property type="resolution" value="3.49 A"/>
    <property type="chains" value="72=2-160"/>
</dbReference>
<dbReference type="PDB" id="7A01">
    <property type="method" value="EM"/>
    <property type="resolution" value="3.60 A"/>
    <property type="chains" value="72=2-160"/>
</dbReference>
<dbReference type="PDB" id="7MDZ">
    <property type="method" value="EM"/>
    <property type="resolution" value="3.20 A"/>
    <property type="chains" value="T=1-160"/>
</dbReference>
<dbReference type="PDB" id="7NFX">
    <property type="method" value="EM"/>
    <property type="resolution" value="3.20 A"/>
    <property type="chains" value="T=1-160"/>
</dbReference>
<dbReference type="PDB" id="7NWG">
    <property type="method" value="EM"/>
    <property type="resolution" value="3.80 A"/>
    <property type="chains" value="T3=2-160"/>
</dbReference>
<dbReference type="PDB" id="7NWH">
    <property type="method" value="EM"/>
    <property type="resolution" value="4.10 A"/>
    <property type="chains" value="T=1-160"/>
</dbReference>
<dbReference type="PDB" id="7NWI">
    <property type="method" value="EM"/>
    <property type="resolution" value="3.13 A"/>
    <property type="chains" value="T=2-160"/>
</dbReference>
<dbReference type="PDB" id="7O7Y">
    <property type="method" value="EM"/>
    <property type="resolution" value="2.20 A"/>
    <property type="chains" value="BT=1-160"/>
</dbReference>
<dbReference type="PDB" id="7O7Z">
    <property type="method" value="EM"/>
    <property type="resolution" value="2.40 A"/>
    <property type="chains" value="BT=1-160"/>
</dbReference>
<dbReference type="PDB" id="7O80">
    <property type="method" value="EM"/>
    <property type="resolution" value="2.90 A"/>
    <property type="chains" value="BT=1-160"/>
</dbReference>
<dbReference type="PDB" id="7O81">
    <property type="method" value="EM"/>
    <property type="resolution" value="3.10 A"/>
    <property type="chains" value="BT=1-160"/>
</dbReference>
<dbReference type="PDB" id="7OBR">
    <property type="method" value="EM"/>
    <property type="resolution" value="2.80 A"/>
    <property type="chains" value="T=1-160"/>
</dbReference>
<dbReference type="PDB" id="7OYD">
    <property type="method" value="EM"/>
    <property type="resolution" value="2.30 A"/>
    <property type="chains" value="T=1-160"/>
</dbReference>
<dbReference type="PDB" id="7QWQ">
    <property type="method" value="EM"/>
    <property type="resolution" value="2.83 A"/>
    <property type="chains" value="T=1-160"/>
</dbReference>
<dbReference type="PDB" id="7QWR">
    <property type="method" value="EM"/>
    <property type="resolution" value="2.90 A"/>
    <property type="chains" value="T=1-160"/>
</dbReference>
<dbReference type="PDB" id="7QWS">
    <property type="method" value="EM"/>
    <property type="resolution" value="3.40 A"/>
    <property type="chains" value="T=1-160"/>
</dbReference>
<dbReference type="PDB" id="7TM3">
    <property type="method" value="EM"/>
    <property type="resolution" value="3.25 A"/>
    <property type="chains" value="T=1-160"/>
</dbReference>
<dbReference type="PDB" id="7TOQ">
    <property type="method" value="EM"/>
    <property type="resolution" value="3.10 A"/>
    <property type="chains" value="AL21=2-160"/>
</dbReference>
<dbReference type="PDB" id="7TOR">
    <property type="method" value="EM"/>
    <property type="resolution" value="2.90 A"/>
    <property type="chains" value="AL21=2-160"/>
</dbReference>
<dbReference type="PDB" id="7TUT">
    <property type="method" value="EM"/>
    <property type="resolution" value="3.88 A"/>
    <property type="chains" value="T=1-160"/>
</dbReference>
<dbReference type="PDB" id="7UCJ">
    <property type="method" value="EM"/>
    <property type="resolution" value="3.10 A"/>
    <property type="chains" value="T=2-160"/>
</dbReference>
<dbReference type="PDB" id="7UCK">
    <property type="method" value="EM"/>
    <property type="resolution" value="2.80 A"/>
    <property type="chains" value="T=2-160"/>
</dbReference>
<dbReference type="PDB" id="7ZJW">
    <property type="method" value="EM"/>
    <property type="resolution" value="2.80 A"/>
    <property type="chains" value="LW=1-160"/>
</dbReference>
<dbReference type="PDB" id="7ZJX">
    <property type="method" value="EM"/>
    <property type="resolution" value="3.10 A"/>
    <property type="chains" value="LW=1-160"/>
</dbReference>
<dbReference type="PDB" id="8B5L">
    <property type="method" value="EM"/>
    <property type="resolution" value="2.86 A"/>
    <property type="chains" value="T=2-160"/>
</dbReference>
<dbReference type="PDB" id="8B6C">
    <property type="method" value="EM"/>
    <property type="resolution" value="2.79 A"/>
    <property type="chains" value="T=2-160"/>
</dbReference>
<dbReference type="PDB" id="8BHF">
    <property type="method" value="EM"/>
    <property type="resolution" value="3.10 A"/>
    <property type="chains" value="G1=2-160"/>
</dbReference>
<dbReference type="PDB" id="8BPO">
    <property type="method" value="EM"/>
    <property type="resolution" value="2.80 A"/>
    <property type="chains" value="S2=1-160"/>
</dbReference>
<dbReference type="PDB" id="8BTK">
    <property type="method" value="EM"/>
    <property type="resolution" value="3.50 A"/>
    <property type="chains" value="BT=1-160"/>
</dbReference>
<dbReference type="PDB" id="8P2K">
    <property type="method" value="EM"/>
    <property type="resolution" value="2.90 A"/>
    <property type="chains" value="BT=1-160"/>
</dbReference>
<dbReference type="PDB" id="8RJB">
    <property type="method" value="EM"/>
    <property type="resolution" value="2.69 A"/>
    <property type="chains" value="T=1-160"/>
</dbReference>
<dbReference type="PDB" id="8RJC">
    <property type="method" value="EM"/>
    <property type="resolution" value="2.90 A"/>
    <property type="chains" value="T=1-160"/>
</dbReference>
<dbReference type="PDB" id="8RJD">
    <property type="method" value="EM"/>
    <property type="resolution" value="2.79 A"/>
    <property type="chains" value="T=1-160"/>
</dbReference>
<dbReference type="PDB" id="8SCB">
    <property type="method" value="EM"/>
    <property type="resolution" value="2.50 A"/>
    <property type="chains" value="T=1-160"/>
</dbReference>
<dbReference type="PDB" id="8VFT">
    <property type="method" value="EM"/>
    <property type="resolution" value="3.30 A"/>
    <property type="chains" value="T=1-160"/>
</dbReference>
<dbReference type="PDB" id="9BDL">
    <property type="method" value="EM"/>
    <property type="resolution" value="2.80 A"/>
    <property type="chains" value="AL21=2-160"/>
</dbReference>
<dbReference type="PDB" id="9BDN">
    <property type="method" value="EM"/>
    <property type="resolution" value="3.10 A"/>
    <property type="chains" value="AL21=2-160"/>
</dbReference>
<dbReference type="PDB" id="9BDP">
    <property type="method" value="EM"/>
    <property type="resolution" value="3.70 A"/>
    <property type="chains" value="AL21=2-160"/>
</dbReference>
<dbReference type="PDB" id="9F1B">
    <property type="method" value="EM"/>
    <property type="resolution" value="3.01 A"/>
    <property type="chains" value="BT=1-160"/>
</dbReference>
<dbReference type="PDB" id="9F1C">
    <property type="method" value="EM"/>
    <property type="resolution" value="3.78 A"/>
    <property type="chains" value="BT=1-160"/>
</dbReference>
<dbReference type="PDB" id="9F1D">
    <property type="method" value="EM"/>
    <property type="resolution" value="3.26 A"/>
    <property type="chains" value="BT=1-160"/>
</dbReference>
<dbReference type="PDBsum" id="3JAG"/>
<dbReference type="PDBsum" id="3JAH"/>
<dbReference type="PDBsum" id="3JAI"/>
<dbReference type="PDBsum" id="5LZS"/>
<dbReference type="PDBsum" id="5LZT"/>
<dbReference type="PDBsum" id="5LZU"/>
<dbReference type="PDBsum" id="5LZV"/>
<dbReference type="PDBsum" id="5LZW"/>
<dbReference type="PDBsum" id="5LZX"/>
<dbReference type="PDBsum" id="5LZY"/>
<dbReference type="PDBsum" id="5LZZ"/>
<dbReference type="PDBsum" id="6D90"/>
<dbReference type="PDBsum" id="6D9J"/>
<dbReference type="PDBsum" id="6FTG"/>
<dbReference type="PDBsum" id="6FTI"/>
<dbReference type="PDBsum" id="6FTJ"/>
<dbReference type="PDBsum" id="6GZ3"/>
<dbReference type="PDBsum" id="6HCF"/>
<dbReference type="PDBsum" id="6HCJ"/>
<dbReference type="PDBsum" id="6HCM"/>
<dbReference type="PDBsum" id="6HCQ"/>
<dbReference type="PDBsum" id="6MTB"/>
<dbReference type="PDBsum" id="6MTC"/>
<dbReference type="PDBsum" id="6MTD"/>
<dbReference type="PDBsum" id="6MTE"/>
<dbReference type="PDBsum" id="6P5I"/>
<dbReference type="PDBsum" id="6P5J"/>
<dbReference type="PDBsum" id="6P5K"/>
<dbReference type="PDBsum" id="6P5N"/>
<dbReference type="PDBsum" id="6R5Q"/>
<dbReference type="PDBsum" id="6R6G"/>
<dbReference type="PDBsum" id="6R6P"/>
<dbReference type="PDBsum" id="6R7Q"/>
<dbReference type="PDBsum" id="6SGC"/>
<dbReference type="PDBsum" id="6T59"/>
<dbReference type="PDBsum" id="6ZVK"/>
<dbReference type="PDBsum" id="7A01"/>
<dbReference type="PDBsum" id="7MDZ"/>
<dbReference type="PDBsum" id="7NFX"/>
<dbReference type="PDBsum" id="7NWG"/>
<dbReference type="PDBsum" id="7NWH"/>
<dbReference type="PDBsum" id="7NWI"/>
<dbReference type="PDBsum" id="7O7Y"/>
<dbReference type="PDBsum" id="7O7Z"/>
<dbReference type="PDBsum" id="7O80"/>
<dbReference type="PDBsum" id="7O81"/>
<dbReference type="PDBsum" id="7OBR"/>
<dbReference type="PDBsum" id="7OYD"/>
<dbReference type="PDBsum" id="7QWQ"/>
<dbReference type="PDBsum" id="7QWR"/>
<dbReference type="PDBsum" id="7QWS"/>
<dbReference type="PDBsum" id="7TM3"/>
<dbReference type="PDBsum" id="7TOQ"/>
<dbReference type="PDBsum" id="7TOR"/>
<dbReference type="PDBsum" id="7TUT"/>
<dbReference type="PDBsum" id="7UCJ"/>
<dbReference type="PDBsum" id="7UCK"/>
<dbReference type="PDBsum" id="7ZJW"/>
<dbReference type="PDBsum" id="7ZJX"/>
<dbReference type="PDBsum" id="8B5L"/>
<dbReference type="PDBsum" id="8B6C"/>
<dbReference type="PDBsum" id="8BHF"/>
<dbReference type="PDBsum" id="8BPO"/>
<dbReference type="PDBsum" id="8BTK"/>
<dbReference type="PDBsum" id="8P2K"/>
<dbReference type="PDBsum" id="8RJB"/>
<dbReference type="PDBsum" id="8RJC"/>
<dbReference type="PDBsum" id="8RJD"/>
<dbReference type="PDBsum" id="8SCB"/>
<dbReference type="PDBsum" id="8VFT"/>
<dbReference type="PDBsum" id="9BDL"/>
<dbReference type="PDBsum" id="9BDN"/>
<dbReference type="PDBsum" id="9BDP"/>
<dbReference type="PDBsum" id="9F1B"/>
<dbReference type="PDBsum" id="9F1C"/>
<dbReference type="PDBsum" id="9F1D"/>
<dbReference type="EMDB" id="EMD-0098"/>
<dbReference type="EMDB" id="EMD-0099"/>
<dbReference type="EMDB" id="EMD-0100"/>
<dbReference type="EMDB" id="EMD-0192"/>
<dbReference type="EMDB" id="EMD-0194"/>
<dbReference type="EMDB" id="EMD-0195"/>
<dbReference type="EMDB" id="EMD-0197"/>
<dbReference type="EMDB" id="EMD-10181"/>
<dbReference type="EMDB" id="EMD-10380"/>
<dbReference type="EMDB" id="EMD-11459"/>
<dbReference type="EMDB" id="EMD-11590"/>
<dbReference type="EMDB" id="EMD-12303"/>
<dbReference type="EMDB" id="EMD-12631"/>
<dbReference type="EMDB" id="EMD-12632"/>
<dbReference type="EMDB" id="EMD-12633"/>
<dbReference type="EMDB" id="EMD-12756"/>
<dbReference type="EMDB" id="EMD-12757"/>
<dbReference type="EMDB" id="EMD-12758"/>
<dbReference type="EMDB" id="EMD-12759"/>
<dbReference type="EMDB" id="EMD-12801"/>
<dbReference type="EMDB" id="EMD-13114"/>
<dbReference type="EMDB" id="EMD-14191"/>
<dbReference type="EMDB" id="EMD-14192"/>
<dbReference type="EMDB" id="EMD-14193"/>
<dbReference type="EMDB" id="EMD-14751"/>
<dbReference type="EMDB" id="EMD-14752"/>
<dbReference type="EMDB" id="EMD-15860"/>
<dbReference type="EMDB" id="EMD-15863"/>
<dbReference type="EMDB" id="EMD-16052"/>
<dbReference type="EMDB" id="EMD-16155"/>
<dbReference type="EMDB" id="EMD-16232"/>
<dbReference type="EMDB" id="EMD-17367"/>
<dbReference type="EMDB" id="EMD-19195"/>
<dbReference type="EMDB" id="EMD-19197"/>
<dbReference type="EMDB" id="EMD-19198"/>
<dbReference type="EMDB" id="EMD-20255"/>
<dbReference type="EMDB" id="EMD-20256"/>
<dbReference type="EMDB" id="EMD-20257"/>
<dbReference type="EMDB" id="EMD-20258"/>
<dbReference type="EMDB" id="EMD-23785"/>
<dbReference type="EMDB" id="EMD-25994"/>
<dbReference type="EMDB" id="EMD-26035"/>
<dbReference type="EMDB" id="EMD-26036"/>
<dbReference type="EMDB" id="EMD-26133"/>
<dbReference type="EMDB" id="EMD-26444"/>
<dbReference type="EMDB" id="EMD-26445"/>
<dbReference type="EMDB" id="EMD-40344"/>
<dbReference type="EMDB" id="EMD-4130"/>
<dbReference type="EMDB" id="EMD-4131"/>
<dbReference type="EMDB" id="EMD-4132"/>
<dbReference type="EMDB" id="EMD-4133"/>
<dbReference type="EMDB" id="EMD-4134"/>
<dbReference type="EMDB" id="EMD-4135"/>
<dbReference type="EMDB" id="EMD-4136"/>
<dbReference type="EMDB" id="EMD-4137"/>
<dbReference type="EMDB" id="EMD-4300"/>
<dbReference type="EMDB" id="EMD-4315"/>
<dbReference type="EMDB" id="EMD-4316"/>
<dbReference type="EMDB" id="EMD-4317"/>
<dbReference type="EMDB" id="EMD-43189"/>
<dbReference type="EMDB" id="EMD-44461"/>
<dbReference type="EMDB" id="EMD-44463"/>
<dbReference type="EMDB" id="EMD-44464"/>
<dbReference type="EMDB" id="EMD-4729"/>
<dbReference type="EMDB" id="EMD-4735"/>
<dbReference type="EMDB" id="EMD-4737"/>
<dbReference type="EMDB" id="EMD-4745"/>
<dbReference type="EMDB" id="EMD-50124"/>
<dbReference type="EMDB" id="EMD-50125"/>
<dbReference type="EMDB" id="EMD-50126"/>
<dbReference type="EMDB" id="EMD-7834"/>
<dbReference type="EMDB" id="EMD-7836"/>
<dbReference type="EMDB" id="EMD-9237"/>
<dbReference type="EMDB" id="EMD-9239"/>
<dbReference type="EMDB" id="EMD-9240"/>
<dbReference type="EMDB" id="EMD-9242"/>
<dbReference type="SMR" id="G1SHQ2"/>
<dbReference type="FunCoup" id="G1SHQ2">
    <property type="interactions" value="1001"/>
</dbReference>
<dbReference type="IntAct" id="G1SHQ2">
    <property type="interactions" value="1"/>
</dbReference>
<dbReference type="STRING" id="9986.ENSOCUP00000002166"/>
<dbReference type="PaxDb" id="9986-ENSOCUP00000002166"/>
<dbReference type="Ensembl" id="ENSOCUT00000002505.2">
    <property type="protein sequence ID" value="ENSOCUP00000002166.1"/>
    <property type="gene ID" value="ENSOCUG00000002506.2"/>
</dbReference>
<dbReference type="Ensembl" id="ENSOCUT00000026315.2">
    <property type="protein sequence ID" value="ENSOCUP00000019748.2"/>
    <property type="gene ID" value="ENSOCUG00000024404.2"/>
</dbReference>
<dbReference type="Ensembl" id="ENSOCUT00000029945.1">
    <property type="protein sequence ID" value="ENSOCUP00000023841.1"/>
    <property type="gene ID" value="ENSOCUG00000026556.1"/>
</dbReference>
<dbReference type="GeneID" id="100338855"/>
<dbReference type="KEGG" id="ocu:100338855"/>
<dbReference type="KEGG" id="ocu:100343039"/>
<dbReference type="KEGG" id="ocu:108175794"/>
<dbReference type="KEGG" id="ocu:108178019"/>
<dbReference type="CTD" id="6144"/>
<dbReference type="eggNOG" id="KOG1732">
    <property type="taxonomic scope" value="Eukaryota"/>
</dbReference>
<dbReference type="GeneTree" id="ENSGT00950000182922"/>
<dbReference type="HOGENOM" id="CLU_103610_0_1_1"/>
<dbReference type="OMA" id="INYGDYV"/>
<dbReference type="OrthoDB" id="9981295at2759"/>
<dbReference type="TreeFam" id="TF314640"/>
<dbReference type="Proteomes" id="UP000001811">
    <property type="component" value="Chromosome 3"/>
</dbReference>
<dbReference type="Bgee" id="ENSOCUG00000002506">
    <property type="expression patterns" value="Expressed in left lung and 15 other cell types or tissues"/>
</dbReference>
<dbReference type="GO" id="GO:0005829">
    <property type="term" value="C:cytosol"/>
    <property type="evidence" value="ECO:0007669"/>
    <property type="project" value="UniProtKB-SubCell"/>
</dbReference>
<dbReference type="GO" id="GO:0005783">
    <property type="term" value="C:endoplasmic reticulum"/>
    <property type="evidence" value="ECO:0007669"/>
    <property type="project" value="UniProtKB-SubCell"/>
</dbReference>
<dbReference type="GO" id="GO:1990904">
    <property type="term" value="C:ribonucleoprotein complex"/>
    <property type="evidence" value="ECO:0007669"/>
    <property type="project" value="UniProtKB-KW"/>
</dbReference>
<dbReference type="GO" id="GO:0005840">
    <property type="term" value="C:ribosome"/>
    <property type="evidence" value="ECO:0007669"/>
    <property type="project" value="UniProtKB-KW"/>
</dbReference>
<dbReference type="GO" id="GO:0003735">
    <property type="term" value="F:structural constituent of ribosome"/>
    <property type="evidence" value="ECO:0007669"/>
    <property type="project" value="InterPro"/>
</dbReference>
<dbReference type="GO" id="GO:0006412">
    <property type="term" value="P:translation"/>
    <property type="evidence" value="ECO:0007669"/>
    <property type="project" value="InterPro"/>
</dbReference>
<dbReference type="FunFam" id="2.30.30.70:FF:000001">
    <property type="entry name" value="60S ribosomal protein L21"/>
    <property type="match status" value="1"/>
</dbReference>
<dbReference type="FunFam" id="6.10.250.3260:FF:000001">
    <property type="entry name" value="60S ribosomal protein L21"/>
    <property type="match status" value="1"/>
</dbReference>
<dbReference type="Gene3D" id="6.10.250.3260">
    <property type="match status" value="1"/>
</dbReference>
<dbReference type="Gene3D" id="2.30.30.70">
    <property type="entry name" value="Ribosomal protein L21"/>
    <property type="match status" value="1"/>
</dbReference>
<dbReference type="InterPro" id="IPR001147">
    <property type="entry name" value="Ribosomal_eL21"/>
</dbReference>
<dbReference type="InterPro" id="IPR018259">
    <property type="entry name" value="Ribosomal_eL21_CS"/>
</dbReference>
<dbReference type="InterPro" id="IPR036948">
    <property type="entry name" value="Ribosomal_eL21_sf"/>
</dbReference>
<dbReference type="InterPro" id="IPR008991">
    <property type="entry name" value="Translation_prot_SH3-like_sf"/>
</dbReference>
<dbReference type="PANTHER" id="PTHR20981">
    <property type="entry name" value="60S RIBOSOMAL PROTEIN L21"/>
    <property type="match status" value="1"/>
</dbReference>
<dbReference type="Pfam" id="PF01157">
    <property type="entry name" value="Ribosomal_L21e"/>
    <property type="match status" value="1"/>
</dbReference>
<dbReference type="SUPFAM" id="SSF50104">
    <property type="entry name" value="Translation proteins SH3-like domain"/>
    <property type="match status" value="1"/>
</dbReference>
<dbReference type="PROSITE" id="PS01171">
    <property type="entry name" value="RIBOSOMAL_L21E"/>
    <property type="match status" value="1"/>
</dbReference>